<evidence type="ECO:0000256" key="1">
    <source>
        <dbReference type="SAM" id="MobiDB-lite"/>
    </source>
</evidence>
<evidence type="ECO:0000269" key="2">
    <source>
    </source>
</evidence>
<evidence type="ECO:0000269" key="3">
    <source>
    </source>
</evidence>
<evidence type="ECO:0000269" key="4">
    <source>
    </source>
</evidence>
<evidence type="ECO:0007744" key="5">
    <source>
    </source>
</evidence>
<evidence type="ECO:0007744" key="6">
    <source>
    </source>
</evidence>
<comment type="PTM">
    <text evidence="3 4">Pyrophosphorylated by 5-diphosphoinositol pentakisphosphate (5-IP7) (PubMed:15604408). Serine pyrophosphorylation is achieved by Mg(2+)-dependent, but enzyme independent transfer of a beta-phosphate from a inositol pyrophosphate to a pre-phosphorylated serine residue (PubMed:15604408, PubMed:17873058).</text>
</comment>
<comment type="miscellaneous">
    <text evidence="2">Present with 10300 molecules/cell in log phase SD medium.</text>
</comment>
<keyword id="KW-0597">Phosphoprotein</keyword>
<keyword id="KW-1185">Reference proteome</keyword>
<name>YG3A_YEAST</name>
<sequence length="816" mass="92698">MLFNINRQEDDPFTQLINQSSANTQNQQAHQQESPYQFLQKVVSNEPKGKEEWVSPFRQDALANRQNNRAYGEDAKNRKFPTVSATSAYSKQQPKDLGYKNIPKNAKRAKDIRFPTYLTQNEERQYQLLTELELKEKHLKYLKKCQKITDLTKDEKDDTDTTTSSSTSTSSSSSSSSSSSSSSSSDEGDVTSTTTSEATEATADTATTTTTTTSTSTTSTSTTNAVENSADEATSVEEEHEDKVSESTSIGKGTADSAQINVAEPISSENGVLEPRTTDQSGGSKSGVVPTDEQKEEKSDVKKVNPPSGEEKKEVEAEGDAEEETEQSSAEESAERTSTPETSEPESEEDESPIDPSKAPKVPFQEPSRKERTGIFALWKSPTSSSTQKSKTAAPSNPVATPENPELIVKTKEHGYLSKAVYDKINYDEKIHQAWLADLRAKEKDKYDAKNKEYKEKLQDLQNQIDEIENSMKAMREETSEKIEVSKNRLVKKIIDVNAEHNNKKLMILKDTENMKNQKLQEKNEVLDKQTNVKSEIDDLNNEKTNVQKEFNDWTTNLSNLSQQLDAQIFKINQINLKQGKVQNEIDNLEKKKEDLVTQTEENKKLHEKNVQVLESVENKEYLPQINDIDNQISSLLNEVTIIKQENANEKTQLSAITKRLEDERRAHEEQLKLEAEERKRKEENLLEKQRQELEEQAHQAQLDHEQQITQVKQTYNDQLTELQDKLATEEKELEAVKRERTRLQAEKAIEEQTRQKNADEALKQEILSRQHKQAEGIHAAENHKIPNDRSQKNTSVLPKDDSLYEYHTEEDVMYA</sequence>
<accession>P53278</accession>
<accession>D6VUR2</accession>
<proteinExistence type="evidence at protein level"/>
<protein>
    <recommendedName>
        <fullName>Uncharacterized protein YGR130C</fullName>
    </recommendedName>
</protein>
<feature type="chain" id="PRO_0000202822" description="Uncharacterized protein YGR130C">
    <location>
        <begin position="1"/>
        <end position="816"/>
    </location>
</feature>
<feature type="region of interest" description="Disordered" evidence="1">
    <location>
        <begin position="1"/>
        <end position="34"/>
    </location>
</feature>
<feature type="region of interest" description="Disordered" evidence="1">
    <location>
        <begin position="65"/>
        <end position="101"/>
    </location>
</feature>
<feature type="region of interest" description="Disordered" evidence="1">
    <location>
        <begin position="154"/>
        <end position="406"/>
    </location>
</feature>
<feature type="region of interest" description="Disordered" evidence="1">
    <location>
        <begin position="770"/>
        <end position="816"/>
    </location>
</feature>
<feature type="compositionally biased region" description="Low complexity" evidence="1">
    <location>
        <begin position="18"/>
        <end position="32"/>
    </location>
</feature>
<feature type="compositionally biased region" description="Polar residues" evidence="1">
    <location>
        <begin position="83"/>
        <end position="92"/>
    </location>
</feature>
<feature type="compositionally biased region" description="Low complexity" evidence="1">
    <location>
        <begin position="161"/>
        <end position="223"/>
    </location>
</feature>
<feature type="compositionally biased region" description="Polar residues" evidence="1">
    <location>
        <begin position="246"/>
        <end position="260"/>
    </location>
</feature>
<feature type="compositionally biased region" description="Basic and acidic residues" evidence="1">
    <location>
        <begin position="292"/>
        <end position="316"/>
    </location>
</feature>
<feature type="compositionally biased region" description="Acidic residues" evidence="1">
    <location>
        <begin position="317"/>
        <end position="326"/>
    </location>
</feature>
<feature type="compositionally biased region" description="Low complexity" evidence="1">
    <location>
        <begin position="327"/>
        <end position="342"/>
    </location>
</feature>
<feature type="compositionally biased region" description="Acidic residues" evidence="1">
    <location>
        <begin position="343"/>
        <end position="353"/>
    </location>
</feature>
<feature type="compositionally biased region" description="Low complexity" evidence="1">
    <location>
        <begin position="380"/>
        <end position="396"/>
    </location>
</feature>
<feature type="compositionally biased region" description="Basic and acidic residues" evidence="1">
    <location>
        <begin position="770"/>
        <end position="792"/>
    </location>
</feature>
<feature type="compositionally biased region" description="Basic and acidic residues" evidence="1">
    <location>
        <begin position="799"/>
        <end position="816"/>
    </location>
</feature>
<feature type="modified residue" description="Phosphoserine" evidence="6">
    <location>
        <position position="286"/>
    </location>
</feature>
<feature type="modified residue" description="Phosphoserine" evidence="5">
    <location>
        <position position="343"/>
    </location>
</feature>
<feature type="modified residue" description="Phosphoserine" evidence="5">
    <location>
        <position position="347"/>
    </location>
</feature>
<feature type="modified residue" description="Phosphothreonine" evidence="6">
    <location>
        <position position="809"/>
    </location>
</feature>
<organism>
    <name type="scientific">Saccharomyces cerevisiae (strain ATCC 204508 / S288c)</name>
    <name type="common">Baker's yeast</name>
    <dbReference type="NCBI Taxonomy" id="559292"/>
    <lineage>
        <taxon>Eukaryota</taxon>
        <taxon>Fungi</taxon>
        <taxon>Dikarya</taxon>
        <taxon>Ascomycota</taxon>
        <taxon>Saccharomycotina</taxon>
        <taxon>Saccharomycetes</taxon>
        <taxon>Saccharomycetales</taxon>
        <taxon>Saccharomycetaceae</taxon>
        <taxon>Saccharomyces</taxon>
    </lineage>
</organism>
<gene>
    <name type="ordered locus">YGR130C</name>
</gene>
<dbReference type="EMBL" id="Z72915">
    <property type="protein sequence ID" value="CAA97143.1"/>
    <property type="molecule type" value="Genomic_DNA"/>
</dbReference>
<dbReference type="EMBL" id="BK006941">
    <property type="protein sequence ID" value="DAA08223.1"/>
    <property type="molecule type" value="Genomic_DNA"/>
</dbReference>
<dbReference type="PIR" id="S64439">
    <property type="entry name" value="S64439"/>
</dbReference>
<dbReference type="RefSeq" id="NP_011646.1">
    <property type="nucleotide sequence ID" value="NM_001181259.1"/>
</dbReference>
<dbReference type="SMR" id="P53278"/>
<dbReference type="BioGRID" id="33378">
    <property type="interactions" value="205"/>
</dbReference>
<dbReference type="DIP" id="DIP-3006N"/>
<dbReference type="FunCoup" id="P53278">
    <property type="interactions" value="413"/>
</dbReference>
<dbReference type="IntAct" id="P53278">
    <property type="interactions" value="68"/>
</dbReference>
<dbReference type="MINT" id="P53278"/>
<dbReference type="STRING" id="4932.YGR130C"/>
<dbReference type="GlyGen" id="P53278">
    <property type="glycosylation" value="2 sites, 1 O-linked glycan (1 site)"/>
</dbReference>
<dbReference type="iPTMnet" id="P53278"/>
<dbReference type="PaxDb" id="4932-YGR130C"/>
<dbReference type="PeptideAtlas" id="P53278"/>
<dbReference type="EnsemblFungi" id="YGR130C_mRNA">
    <property type="protein sequence ID" value="YGR130C"/>
    <property type="gene ID" value="YGR130C"/>
</dbReference>
<dbReference type="GeneID" id="853031"/>
<dbReference type="KEGG" id="sce:YGR130C"/>
<dbReference type="AGR" id="SGD:S000003362"/>
<dbReference type="SGD" id="S000003362">
    <property type="gene designation" value="YGR130C"/>
</dbReference>
<dbReference type="VEuPathDB" id="FungiDB:YGR130C"/>
<dbReference type="eggNOG" id="ENOG502RJFX">
    <property type="taxonomic scope" value="Eukaryota"/>
</dbReference>
<dbReference type="HOGENOM" id="CLU_018313_0_0_1"/>
<dbReference type="InParanoid" id="P53278"/>
<dbReference type="OMA" id="HEVYRKQ"/>
<dbReference type="OrthoDB" id="4068250at2759"/>
<dbReference type="BioCyc" id="YEAST:G3O-30836-MONOMER"/>
<dbReference type="BioGRID-ORCS" id="853031">
    <property type="hits" value="0 hits in 10 CRISPR screens"/>
</dbReference>
<dbReference type="PRO" id="PR:P53278"/>
<dbReference type="Proteomes" id="UP000002311">
    <property type="component" value="Chromosome VII"/>
</dbReference>
<dbReference type="RNAct" id="P53278">
    <property type="molecule type" value="protein"/>
</dbReference>
<dbReference type="GO" id="GO:0005737">
    <property type="term" value="C:cytoplasm"/>
    <property type="evidence" value="ECO:0007005"/>
    <property type="project" value="SGD"/>
</dbReference>
<dbReference type="GO" id="GO:0032126">
    <property type="term" value="C:eisosome"/>
    <property type="evidence" value="ECO:0000314"/>
    <property type="project" value="SGD"/>
</dbReference>
<dbReference type="GO" id="GO:0042149">
    <property type="term" value="P:cellular response to glucose starvation"/>
    <property type="evidence" value="ECO:0000315"/>
    <property type="project" value="SGD"/>
</dbReference>
<dbReference type="GO" id="GO:0097446">
    <property type="term" value="P:protein localization to eisosome filament"/>
    <property type="evidence" value="ECO:0000315"/>
    <property type="project" value="SGD"/>
</dbReference>
<reference key="1">
    <citation type="journal article" date="1997" name="Nature">
        <title>The nucleotide sequence of Saccharomyces cerevisiae chromosome VII.</title>
        <authorList>
            <person name="Tettelin H."/>
            <person name="Agostoni-Carbone M.L."/>
            <person name="Albermann K."/>
            <person name="Albers M."/>
            <person name="Arroyo J."/>
            <person name="Backes U."/>
            <person name="Barreiros T."/>
            <person name="Bertani I."/>
            <person name="Bjourson A.J."/>
            <person name="Brueckner M."/>
            <person name="Bruschi C.V."/>
            <person name="Carignani G."/>
            <person name="Castagnoli L."/>
            <person name="Cerdan E."/>
            <person name="Clemente M.L."/>
            <person name="Coblenz A."/>
            <person name="Coglievina M."/>
            <person name="Coissac E."/>
            <person name="Defoor E."/>
            <person name="Del Bino S."/>
            <person name="Delius H."/>
            <person name="Delneri D."/>
            <person name="de Wergifosse P."/>
            <person name="Dujon B."/>
            <person name="Durand P."/>
            <person name="Entian K.-D."/>
            <person name="Eraso P."/>
            <person name="Escribano V."/>
            <person name="Fabiani L."/>
            <person name="Fartmann B."/>
            <person name="Feroli F."/>
            <person name="Feuermann M."/>
            <person name="Frontali L."/>
            <person name="Garcia-Gonzalez M."/>
            <person name="Garcia-Saez M.I."/>
            <person name="Goffeau A."/>
            <person name="Guerreiro P."/>
            <person name="Hani J."/>
            <person name="Hansen M."/>
            <person name="Hebling U."/>
            <person name="Hernandez K."/>
            <person name="Heumann K."/>
            <person name="Hilger F."/>
            <person name="Hofmann B."/>
            <person name="Indge K.J."/>
            <person name="James C.M."/>
            <person name="Klima R."/>
            <person name="Koetter P."/>
            <person name="Kramer B."/>
            <person name="Kramer W."/>
            <person name="Lauquin G."/>
            <person name="Leuther H."/>
            <person name="Louis E.J."/>
            <person name="Maillier E."/>
            <person name="Marconi A."/>
            <person name="Martegani E."/>
            <person name="Mazon M.J."/>
            <person name="Mazzoni C."/>
            <person name="McReynolds A.D.K."/>
            <person name="Melchioretto P."/>
            <person name="Mewes H.-W."/>
            <person name="Minenkova O."/>
            <person name="Mueller-Auer S."/>
            <person name="Nawrocki A."/>
            <person name="Netter P."/>
            <person name="Neu R."/>
            <person name="Nombela C."/>
            <person name="Oliver S.G."/>
            <person name="Panzeri L."/>
            <person name="Paoluzi S."/>
            <person name="Plevani P."/>
            <person name="Portetelle D."/>
            <person name="Portillo F."/>
            <person name="Potier S."/>
            <person name="Purnelle B."/>
            <person name="Rieger M."/>
            <person name="Riles L."/>
            <person name="Rinaldi T."/>
            <person name="Robben J."/>
            <person name="Rodrigues-Pousada C."/>
            <person name="Rodriguez-Belmonte E."/>
            <person name="Rodriguez-Torres A.M."/>
            <person name="Rose M."/>
            <person name="Ruzzi M."/>
            <person name="Saliola M."/>
            <person name="Sanchez-Perez M."/>
            <person name="Schaefer B."/>
            <person name="Schaefer M."/>
            <person name="Scharfe M."/>
            <person name="Schmidheini T."/>
            <person name="Schreer A."/>
            <person name="Skala J."/>
            <person name="Souciet J.-L."/>
            <person name="Steensma H.Y."/>
            <person name="Talla E."/>
            <person name="Thierry A."/>
            <person name="Vandenbol M."/>
            <person name="van der Aart Q.J.M."/>
            <person name="Van Dyck L."/>
            <person name="Vanoni M."/>
            <person name="Verhasselt P."/>
            <person name="Voet M."/>
            <person name="Volckaert G."/>
            <person name="Wambutt R."/>
            <person name="Watson M.D."/>
            <person name="Weber N."/>
            <person name="Wedler E."/>
            <person name="Wedler H."/>
            <person name="Wipfli P."/>
            <person name="Wolf K."/>
            <person name="Wright L.F."/>
            <person name="Zaccaria P."/>
            <person name="Zimmermann M."/>
            <person name="Zollner A."/>
            <person name="Kleine K."/>
        </authorList>
    </citation>
    <scope>NUCLEOTIDE SEQUENCE [LARGE SCALE GENOMIC DNA]</scope>
    <source>
        <strain>ATCC 204508 / S288c</strain>
    </source>
</reference>
<reference key="2">
    <citation type="journal article" date="2014" name="G3 (Bethesda)">
        <title>The reference genome sequence of Saccharomyces cerevisiae: Then and now.</title>
        <authorList>
            <person name="Engel S.R."/>
            <person name="Dietrich F.S."/>
            <person name="Fisk D.G."/>
            <person name="Binkley G."/>
            <person name="Balakrishnan R."/>
            <person name="Costanzo M.C."/>
            <person name="Dwight S.S."/>
            <person name="Hitz B.C."/>
            <person name="Karra K."/>
            <person name="Nash R.S."/>
            <person name="Weng S."/>
            <person name="Wong E.D."/>
            <person name="Lloyd P."/>
            <person name="Skrzypek M.S."/>
            <person name="Miyasato S.R."/>
            <person name="Simison M."/>
            <person name="Cherry J.M."/>
        </authorList>
    </citation>
    <scope>GENOME REANNOTATION</scope>
    <source>
        <strain>ATCC 204508 / S288c</strain>
    </source>
</reference>
<reference key="3">
    <citation type="journal article" date="2003" name="Nature">
        <title>Global analysis of protein expression in yeast.</title>
        <authorList>
            <person name="Ghaemmaghami S."/>
            <person name="Huh W.-K."/>
            <person name="Bower K."/>
            <person name="Howson R.W."/>
            <person name="Belle A."/>
            <person name="Dephoure N."/>
            <person name="O'Shea E.K."/>
            <person name="Weissman J.S."/>
        </authorList>
    </citation>
    <scope>LEVEL OF PROTEIN EXPRESSION [LARGE SCALE ANALYSIS]</scope>
</reference>
<reference key="4">
    <citation type="journal article" date="2007" name="J. Proteome Res.">
        <title>Large-scale phosphorylation analysis of alpha-factor-arrested Saccharomyces cerevisiae.</title>
        <authorList>
            <person name="Li X."/>
            <person name="Gerber S.A."/>
            <person name="Rudner A.D."/>
            <person name="Beausoleil S.A."/>
            <person name="Haas W."/>
            <person name="Villen J."/>
            <person name="Elias J.E."/>
            <person name="Gygi S.P."/>
        </authorList>
    </citation>
    <scope>PHOSPHORYLATION [LARGE SCALE ANALYSIS] AT SER-343 AND SER-347</scope>
    <scope>IDENTIFICATION BY MASS SPECTROMETRY [LARGE SCALE ANALYSIS]</scope>
    <source>
        <strain>ADR376</strain>
    </source>
</reference>
<reference key="5">
    <citation type="journal article" date="2008" name="Mol. Cell. Proteomics">
        <title>A multidimensional chromatography technology for in-depth phosphoproteome analysis.</title>
        <authorList>
            <person name="Albuquerque C.P."/>
            <person name="Smolka M.B."/>
            <person name="Payne S.H."/>
            <person name="Bafna V."/>
            <person name="Eng J."/>
            <person name="Zhou H."/>
        </authorList>
    </citation>
    <scope>IDENTIFICATION BY MASS SPECTROMETRY [LARGE SCALE ANALYSIS]</scope>
</reference>
<reference key="6">
    <citation type="journal article" date="2009" name="Science">
        <title>Global analysis of Cdk1 substrate phosphorylation sites provides insights into evolution.</title>
        <authorList>
            <person name="Holt L.J."/>
            <person name="Tuch B.B."/>
            <person name="Villen J."/>
            <person name="Johnson A.D."/>
            <person name="Gygi S.P."/>
            <person name="Morgan D.O."/>
        </authorList>
    </citation>
    <scope>PHOSPHORYLATION [LARGE SCALE ANALYSIS] AT SER-286 AND THR-809</scope>
    <scope>IDENTIFICATION BY MASS SPECTROMETRY [LARGE SCALE ANALYSIS]</scope>
</reference>
<reference key="7">
    <citation type="journal article" date="2012" name="Proc. Natl. Acad. Sci. U.S.A.">
        <title>N-terminal acetylome analyses and functional insights of the N-terminal acetyltransferase NatB.</title>
        <authorList>
            <person name="Van Damme P."/>
            <person name="Lasa M."/>
            <person name="Polevoda B."/>
            <person name="Gazquez C."/>
            <person name="Elosegui-Artola A."/>
            <person name="Kim D.S."/>
            <person name="De Juan-Pardo E."/>
            <person name="Demeyer K."/>
            <person name="Hole K."/>
            <person name="Larrea E."/>
            <person name="Timmerman E."/>
            <person name="Prieto J."/>
            <person name="Arnesen T."/>
            <person name="Sherman F."/>
            <person name="Gevaert K."/>
            <person name="Aldabe R."/>
        </authorList>
    </citation>
    <scope>IDENTIFICATION BY MASS SPECTROMETRY [LARGE SCALE ANALYSIS]</scope>
</reference>
<reference key="8">
    <citation type="journal article" date="2004" name="Science">
        <title>Phosphorylation of proteins by inositol pyrophosphates.</title>
        <authorList>
            <person name="Saiardi A."/>
            <person name="Bhandari R."/>
            <person name="Resnick A.C."/>
            <person name="Snowman A.M."/>
            <person name="Snyder S.H."/>
        </authorList>
    </citation>
    <scope>PYROPHOSPHORYLATION</scope>
</reference>
<reference key="9">
    <citation type="journal article" date="2007" name="Proc. Natl. Acad. Sci. U.S.A.">
        <title>Protein pyrophosphorylation by inositol pyrophosphates is a posttranslational event.</title>
        <authorList>
            <person name="Bhandari R."/>
            <person name="Saiardi A."/>
            <person name="Ahmadibeni Y."/>
            <person name="Snowman A.M."/>
            <person name="Resnick A.C."/>
            <person name="Kristiansen T.Z."/>
            <person name="Molina H."/>
            <person name="Pandey A."/>
            <person name="Werner J.K. Jr."/>
            <person name="Juluri K.R."/>
            <person name="Xu Y."/>
            <person name="Prestwich G.D."/>
            <person name="Parang K."/>
            <person name="Snyder S.H."/>
        </authorList>
    </citation>
    <scope>PYROPHOSPHORYLATION</scope>
</reference>